<name>PLCE1_RAT</name>
<comment type="function">
    <text evidence="2 12 15 16">The production of the second messenger molecules diacylglycerol (DAG) and inositol 1,4,5-trisphosphate (IP3) is mediated by activated phosphatidylinositol-specific phospholipase C enzymes. PLCE1 is a bifunctional enzyme which also regulates small GTPases of the Ras superfamily through its Ras guanine-exchange factor (RasGEF) activity. As an effector of heterotrimeric and small G-protein, it may play a role in cell survival, cell growth, actin organization and T-cell activation. In podocytes, is involved in the regulation of lamellipodia formation. Acts downstream of AVIL to allow ARP2/3 complex assembly (By similarity).</text>
</comment>
<comment type="catalytic activity">
    <reaction evidence="9">
        <text>a 1,2-diacyl-sn-glycero-3-phospho-(1D-myo-inositol-4,5-bisphosphate) + H2O = 1D-myo-inositol 1,4,5-trisphosphate + a 1,2-diacyl-sn-glycerol + H(+)</text>
        <dbReference type="Rhea" id="RHEA:33179"/>
        <dbReference type="ChEBI" id="CHEBI:15377"/>
        <dbReference type="ChEBI" id="CHEBI:15378"/>
        <dbReference type="ChEBI" id="CHEBI:17815"/>
        <dbReference type="ChEBI" id="CHEBI:58456"/>
        <dbReference type="ChEBI" id="CHEBI:203600"/>
        <dbReference type="EC" id="3.1.4.11"/>
    </reaction>
</comment>
<comment type="cofactor">
    <cofactor evidence="9">
        <name>Ca(2+)</name>
        <dbReference type="ChEBI" id="CHEBI:29108"/>
    </cofactor>
</comment>
<comment type="activity regulation">
    <text evidence="9 10 11 13 14">Activated by the heterotrimeric G-protein subunits GNA12, GNA13 and GNB1-GNG2. Activated by HRAS, RAP1A, RHOA, RHOB, RHOC, RRAS and RRAS2. Activated by the G(s)-coupled GPCRs ADRB2, PTGER1 and CHRM3 through cyclic-AMP formation and RAP2B activation. Inhibited by G(i)-coupled GPCRs.</text>
</comment>
<comment type="biophysicochemical properties">
    <kinetics>
        <KM evidence="14">6 uM for PtdIns(4,5)P2</KM>
        <Vmax evidence="14">10.0 umol/min/mg enzyme</Vmax>
    </kinetics>
</comment>
<comment type="subunit">
    <text evidence="2 13 16">Interacts with RHOA (PubMed:12900402). Interacts with GTP-bound HRAS, RAP1A, RAP2A, RAP2B and RRAS (By similarity). Interacts with IQGAP1 (PubMed:17086182). Interacts with AVIL (By similarity).</text>
</comment>
<comment type="subcellular location">
    <subcellularLocation>
        <location evidence="2">Cytoplasm</location>
        <location evidence="2">Cytosol</location>
    </subcellularLocation>
    <subcellularLocation>
        <location evidence="2">Cell membrane</location>
    </subcellularLocation>
    <subcellularLocation>
        <location evidence="2">Golgi apparatus membrane</location>
    </subcellularLocation>
    <subcellularLocation>
        <location evidence="2">Cell projection</location>
        <location evidence="2">Lamellipodium</location>
    </subcellularLocation>
    <text evidence="2">Recruited to plasma membrane by activated HRAS and RAP2. Recruited to perinuclear membrane by activated RAP1A. Isoform 1 and isoform 2 associates with Golgi membranes.</text>
</comment>
<comment type="tissue specificity">
    <text evidence="9 16">Ubiquitously expressed. Detected in glomerular podocytes (at protein level).</text>
</comment>
<comment type="domain">
    <text evidence="1">The Ras-associating domain 1 is degenerated and may not bind HRAS (By similarity). The Ras-associating domain 2 mediates interaction with GTP-bound HRAS, RAP1A and probably RAP2A and RAP2B and recruitment of HRAS to the cell membrane.</text>
</comment>
<comment type="domain">
    <text evidence="1">The Ras-GEF domain has a GEF activity towards HRAS and RAP1A. Mediates activation of the mitogen-activated protein kinase pathway (By similarity).</text>
</comment>
<evidence type="ECO:0000250" key="1"/>
<evidence type="ECO:0000250" key="2">
    <source>
        <dbReference type="UniProtKB" id="Q9P212"/>
    </source>
</evidence>
<evidence type="ECO:0000255" key="3">
    <source>
        <dbReference type="PROSITE-ProRule" id="PRU00041"/>
    </source>
</evidence>
<evidence type="ECO:0000255" key="4">
    <source>
        <dbReference type="PROSITE-ProRule" id="PRU00166"/>
    </source>
</evidence>
<evidence type="ECO:0000255" key="5">
    <source>
        <dbReference type="PROSITE-ProRule" id="PRU00168"/>
    </source>
</evidence>
<evidence type="ECO:0000255" key="6">
    <source>
        <dbReference type="PROSITE-ProRule" id="PRU00270"/>
    </source>
</evidence>
<evidence type="ECO:0000255" key="7">
    <source>
        <dbReference type="PROSITE-ProRule" id="PRU00271"/>
    </source>
</evidence>
<evidence type="ECO:0000256" key="8">
    <source>
        <dbReference type="SAM" id="MobiDB-lite"/>
    </source>
</evidence>
<evidence type="ECO:0000269" key="9">
    <source>
    </source>
</evidence>
<evidence type="ECO:0000269" key="10">
    <source>
    </source>
</evidence>
<evidence type="ECO:0000269" key="11">
    <source>
    </source>
</evidence>
<evidence type="ECO:0000269" key="12">
    <source>
    </source>
</evidence>
<evidence type="ECO:0000269" key="13">
    <source>
    </source>
</evidence>
<evidence type="ECO:0000269" key="14">
    <source>
    </source>
</evidence>
<evidence type="ECO:0000269" key="15">
    <source>
    </source>
</evidence>
<evidence type="ECO:0000269" key="16">
    <source>
    </source>
</evidence>
<evidence type="ECO:0000305" key="17"/>
<evidence type="ECO:0000312" key="18">
    <source>
        <dbReference type="RGD" id="69424"/>
    </source>
</evidence>
<evidence type="ECO:0007744" key="19">
    <source>
    </source>
</evidence>
<evidence type="ECO:0007829" key="20">
    <source>
        <dbReference type="PDB" id="6PMP"/>
    </source>
</evidence>
<proteinExistence type="evidence at protein level"/>
<dbReference type="EC" id="3.1.4.11" evidence="9"/>
<dbReference type="EMBL" id="AF323615">
    <property type="protein sequence ID" value="AAK06775.1"/>
    <property type="molecule type" value="mRNA"/>
</dbReference>
<dbReference type="RefSeq" id="NP_446210.1">
    <property type="nucleotide sequence ID" value="NM_053758.2"/>
</dbReference>
<dbReference type="PDB" id="6PMP">
    <property type="method" value="X-ray"/>
    <property type="resolution" value="2.73 A"/>
    <property type="chains" value="A/B/C/D=1284-2098"/>
</dbReference>
<dbReference type="PDB" id="9AX5">
    <property type="method" value="EM"/>
    <property type="resolution" value="3.30 A"/>
    <property type="chains" value="A=837-2281"/>
</dbReference>
<dbReference type="PDBsum" id="6PMP"/>
<dbReference type="PDBsum" id="9AX5"/>
<dbReference type="EMDB" id="EMD-43927"/>
<dbReference type="EMDB" id="EMD-43928"/>
<dbReference type="SMR" id="Q99P84"/>
<dbReference type="BioGRID" id="250398">
    <property type="interactions" value="1"/>
</dbReference>
<dbReference type="FunCoup" id="Q99P84">
    <property type="interactions" value="430"/>
</dbReference>
<dbReference type="IntAct" id="Q99P84">
    <property type="interactions" value="1"/>
</dbReference>
<dbReference type="STRING" id="10116.ENSRNOP00000072165"/>
<dbReference type="iPTMnet" id="Q99P84"/>
<dbReference type="PhosphoSitePlus" id="Q99P84"/>
<dbReference type="PaxDb" id="10116-ENSRNOP00000062667"/>
<dbReference type="GeneID" id="114633"/>
<dbReference type="KEGG" id="rno:114633"/>
<dbReference type="AGR" id="RGD:69424"/>
<dbReference type="CTD" id="51196"/>
<dbReference type="RGD" id="69424">
    <property type="gene designation" value="Plce1"/>
</dbReference>
<dbReference type="eggNOG" id="KOG0169">
    <property type="taxonomic scope" value="Eukaryota"/>
</dbReference>
<dbReference type="InParanoid" id="Q99P84"/>
<dbReference type="OrthoDB" id="269822at2759"/>
<dbReference type="BRENDA" id="3.1.4.11">
    <property type="organism ID" value="5301"/>
</dbReference>
<dbReference type="Reactome" id="R-RNO-1855204">
    <property type="pathway name" value="Synthesis of IP3 and IP4 in the cytosol"/>
</dbReference>
<dbReference type="SABIO-RK" id="Q99P84"/>
<dbReference type="PRO" id="PR:Q99P84"/>
<dbReference type="Proteomes" id="UP000002494">
    <property type="component" value="Unplaced"/>
</dbReference>
<dbReference type="GO" id="GO:0005829">
    <property type="term" value="C:cytosol"/>
    <property type="evidence" value="ECO:0000250"/>
    <property type="project" value="UniProtKB"/>
</dbReference>
<dbReference type="GO" id="GO:0000139">
    <property type="term" value="C:Golgi membrane"/>
    <property type="evidence" value="ECO:0007669"/>
    <property type="project" value="UniProtKB-SubCell"/>
</dbReference>
<dbReference type="GO" id="GO:0030027">
    <property type="term" value="C:lamellipodium"/>
    <property type="evidence" value="ECO:0000250"/>
    <property type="project" value="UniProtKB"/>
</dbReference>
<dbReference type="GO" id="GO:0005886">
    <property type="term" value="C:plasma membrane"/>
    <property type="evidence" value="ECO:0000250"/>
    <property type="project" value="UniProtKB"/>
</dbReference>
<dbReference type="GO" id="GO:0019899">
    <property type="term" value="F:enzyme binding"/>
    <property type="evidence" value="ECO:0000250"/>
    <property type="project" value="UniProtKB"/>
</dbReference>
<dbReference type="GO" id="GO:0005085">
    <property type="term" value="F:guanyl-nucleotide exchange factor activity"/>
    <property type="evidence" value="ECO:0007669"/>
    <property type="project" value="UniProtKB-KW"/>
</dbReference>
<dbReference type="GO" id="GO:0046872">
    <property type="term" value="F:metal ion binding"/>
    <property type="evidence" value="ECO:0007669"/>
    <property type="project" value="UniProtKB-KW"/>
</dbReference>
<dbReference type="GO" id="GO:0004435">
    <property type="term" value="F:phosphatidylinositol-4,5-bisphosphate phospholipase C activity"/>
    <property type="evidence" value="ECO:0000314"/>
    <property type="project" value="RGD"/>
</dbReference>
<dbReference type="GO" id="GO:0004629">
    <property type="term" value="F:phospholipase C activity"/>
    <property type="evidence" value="ECO:0000250"/>
    <property type="project" value="UniProtKB"/>
</dbReference>
<dbReference type="GO" id="GO:0031267">
    <property type="term" value="F:small GTPase binding"/>
    <property type="evidence" value="ECO:0000314"/>
    <property type="project" value="RGD"/>
</dbReference>
<dbReference type="GO" id="GO:0006651">
    <property type="term" value="P:diacylglycerol biosynthetic process"/>
    <property type="evidence" value="ECO:0000250"/>
    <property type="project" value="UniProtKB"/>
</dbReference>
<dbReference type="GO" id="GO:0007173">
    <property type="term" value="P:epidermal growth factor receptor signaling pathway"/>
    <property type="evidence" value="ECO:0000250"/>
    <property type="project" value="UniProtKB"/>
</dbReference>
<dbReference type="GO" id="GO:0007186">
    <property type="term" value="P:G protein-coupled receptor signaling pathway"/>
    <property type="evidence" value="ECO:0000315"/>
    <property type="project" value="RGD"/>
</dbReference>
<dbReference type="GO" id="GO:0032835">
    <property type="term" value="P:glomerulus development"/>
    <property type="evidence" value="ECO:0000266"/>
    <property type="project" value="RGD"/>
</dbReference>
<dbReference type="GO" id="GO:0035556">
    <property type="term" value="P:intracellular signal transduction"/>
    <property type="evidence" value="ECO:0000250"/>
    <property type="project" value="UniProtKB"/>
</dbReference>
<dbReference type="GO" id="GO:0016042">
    <property type="term" value="P:lipid catabolic process"/>
    <property type="evidence" value="ECO:0007669"/>
    <property type="project" value="UniProtKB-KW"/>
</dbReference>
<dbReference type="GO" id="GO:0046488">
    <property type="term" value="P:phosphatidylinositol metabolic process"/>
    <property type="evidence" value="ECO:0000318"/>
    <property type="project" value="GO_Central"/>
</dbReference>
<dbReference type="GO" id="GO:0048015">
    <property type="term" value="P:phosphatidylinositol-mediated signaling"/>
    <property type="evidence" value="ECO:0000318"/>
    <property type="project" value="GO_Central"/>
</dbReference>
<dbReference type="GO" id="GO:0007200">
    <property type="term" value="P:phospholipase C-activating G protein-coupled receptor signaling pathway"/>
    <property type="evidence" value="ECO:0000250"/>
    <property type="project" value="UniProtKB"/>
</dbReference>
<dbReference type="GO" id="GO:0010592">
    <property type="term" value="P:positive regulation of lamellipodium assembly"/>
    <property type="evidence" value="ECO:0000250"/>
    <property type="project" value="UniProtKB"/>
</dbReference>
<dbReference type="GO" id="GO:0007265">
    <property type="term" value="P:Ras protein signal transduction"/>
    <property type="evidence" value="ECO:0000314"/>
    <property type="project" value="RGD"/>
</dbReference>
<dbReference type="GO" id="GO:0051209">
    <property type="term" value="P:release of sequestered calcium ion into cytosol"/>
    <property type="evidence" value="ECO:0000318"/>
    <property type="project" value="GO_Central"/>
</dbReference>
<dbReference type="CDD" id="cd00275">
    <property type="entry name" value="C2_PLC_like"/>
    <property type="match status" value="1"/>
</dbReference>
<dbReference type="CDD" id="cd16203">
    <property type="entry name" value="EFh_PI-PLCepsilon"/>
    <property type="match status" value="1"/>
</dbReference>
<dbReference type="CDD" id="cd08596">
    <property type="entry name" value="PI-PLCc_epsilon"/>
    <property type="match status" value="1"/>
</dbReference>
<dbReference type="CDD" id="cd17229">
    <property type="entry name" value="RA1_PLC-epsilon"/>
    <property type="match status" value="1"/>
</dbReference>
<dbReference type="CDD" id="cd01780">
    <property type="entry name" value="RA2_PLC-epsilon"/>
    <property type="match status" value="1"/>
</dbReference>
<dbReference type="FunFam" id="1.10.238.10:FF:000092">
    <property type="entry name" value="Phosphoinositide phospholipase C"/>
    <property type="match status" value="1"/>
</dbReference>
<dbReference type="FunFam" id="2.60.40.150:FF:000085">
    <property type="entry name" value="Phosphoinositide phospholipase C"/>
    <property type="match status" value="1"/>
</dbReference>
<dbReference type="FunFam" id="3.10.20.90:FF:000086">
    <property type="entry name" value="Phosphoinositide phospholipase C"/>
    <property type="match status" value="1"/>
</dbReference>
<dbReference type="FunFam" id="3.10.20.90:FF:000118">
    <property type="entry name" value="Phosphoinositide phospholipase C"/>
    <property type="match status" value="1"/>
</dbReference>
<dbReference type="FunFam" id="3.20.20.190:FF:000090">
    <property type="entry name" value="Phosphoinositide phospholipase C"/>
    <property type="match status" value="1"/>
</dbReference>
<dbReference type="Gene3D" id="2.60.40.150">
    <property type="entry name" value="C2 domain"/>
    <property type="match status" value="1"/>
</dbReference>
<dbReference type="Gene3D" id="1.10.238.10">
    <property type="entry name" value="EF-hand"/>
    <property type="match status" value="1"/>
</dbReference>
<dbReference type="Gene3D" id="3.20.20.190">
    <property type="entry name" value="Phosphatidylinositol (PI) phosphodiesterase"/>
    <property type="match status" value="1"/>
</dbReference>
<dbReference type="Gene3D" id="3.10.20.90">
    <property type="entry name" value="Phosphatidylinositol 3-kinase Catalytic Subunit, Chain A, domain 1"/>
    <property type="match status" value="2"/>
</dbReference>
<dbReference type="Gene3D" id="1.10.840.10">
    <property type="entry name" value="Ras guanine-nucleotide exchange factors catalytic domain"/>
    <property type="match status" value="1"/>
</dbReference>
<dbReference type="InterPro" id="IPR000008">
    <property type="entry name" value="C2_dom"/>
</dbReference>
<dbReference type="InterPro" id="IPR035892">
    <property type="entry name" value="C2_domain_sf"/>
</dbReference>
<dbReference type="InterPro" id="IPR011992">
    <property type="entry name" value="EF-hand-dom_pair"/>
</dbReference>
<dbReference type="InterPro" id="IPR001192">
    <property type="entry name" value="PI-PLC_fam"/>
</dbReference>
<dbReference type="InterPro" id="IPR046973">
    <property type="entry name" value="PLC-epsilon1_cat"/>
</dbReference>
<dbReference type="InterPro" id="IPR028398">
    <property type="entry name" value="PLC-epsilon1_RA2"/>
</dbReference>
<dbReference type="InterPro" id="IPR017946">
    <property type="entry name" value="PLC-like_Pdiesterase_TIM-brl"/>
</dbReference>
<dbReference type="InterPro" id="IPR046974">
    <property type="entry name" value="PLC_epsilon1_EF"/>
</dbReference>
<dbReference type="InterPro" id="IPR000909">
    <property type="entry name" value="PLipase_C_PInositol-sp_X_dom"/>
</dbReference>
<dbReference type="InterPro" id="IPR001711">
    <property type="entry name" value="PLipase_C_Pinositol-sp_Y"/>
</dbReference>
<dbReference type="InterPro" id="IPR000159">
    <property type="entry name" value="RA_dom"/>
</dbReference>
<dbReference type="InterPro" id="IPR023578">
    <property type="entry name" value="Ras_GEF_dom_sf"/>
</dbReference>
<dbReference type="InterPro" id="IPR001895">
    <property type="entry name" value="RASGEF_cat_dom"/>
</dbReference>
<dbReference type="InterPro" id="IPR036964">
    <property type="entry name" value="RASGEF_cat_dom_sf"/>
</dbReference>
<dbReference type="InterPro" id="IPR029071">
    <property type="entry name" value="Ubiquitin-like_domsf"/>
</dbReference>
<dbReference type="PANTHER" id="PTHR10336:SF6">
    <property type="entry name" value="1-PHOSPHATIDYLINOSITOL 4,5-BISPHOSPHATE PHOSPHODIESTERASE EPSILON-1"/>
    <property type="match status" value="1"/>
</dbReference>
<dbReference type="PANTHER" id="PTHR10336">
    <property type="entry name" value="PHOSPHOINOSITIDE-SPECIFIC PHOSPHOLIPASE C FAMILY PROTEIN"/>
    <property type="match status" value="1"/>
</dbReference>
<dbReference type="Pfam" id="PF00168">
    <property type="entry name" value="C2"/>
    <property type="match status" value="1"/>
</dbReference>
<dbReference type="Pfam" id="PF00388">
    <property type="entry name" value="PI-PLC-X"/>
    <property type="match status" value="1"/>
</dbReference>
<dbReference type="Pfam" id="PF00387">
    <property type="entry name" value="PI-PLC-Y"/>
    <property type="match status" value="1"/>
</dbReference>
<dbReference type="Pfam" id="PF00788">
    <property type="entry name" value="RA"/>
    <property type="match status" value="1"/>
</dbReference>
<dbReference type="Pfam" id="PF00617">
    <property type="entry name" value="RasGEF"/>
    <property type="match status" value="1"/>
</dbReference>
<dbReference type="PRINTS" id="PR00390">
    <property type="entry name" value="PHPHLIPASEC"/>
</dbReference>
<dbReference type="SMART" id="SM00239">
    <property type="entry name" value="C2"/>
    <property type="match status" value="1"/>
</dbReference>
<dbReference type="SMART" id="SM00148">
    <property type="entry name" value="PLCXc"/>
    <property type="match status" value="1"/>
</dbReference>
<dbReference type="SMART" id="SM00149">
    <property type="entry name" value="PLCYc"/>
    <property type="match status" value="1"/>
</dbReference>
<dbReference type="SMART" id="SM00314">
    <property type="entry name" value="RA"/>
    <property type="match status" value="1"/>
</dbReference>
<dbReference type="SMART" id="SM00147">
    <property type="entry name" value="RasGEF"/>
    <property type="match status" value="1"/>
</dbReference>
<dbReference type="SUPFAM" id="SSF49562">
    <property type="entry name" value="C2 domain (Calcium/lipid-binding domain, CaLB)"/>
    <property type="match status" value="1"/>
</dbReference>
<dbReference type="SUPFAM" id="SSF47473">
    <property type="entry name" value="EF-hand"/>
    <property type="match status" value="1"/>
</dbReference>
<dbReference type="SUPFAM" id="SSF51695">
    <property type="entry name" value="PLC-like phosphodiesterases"/>
    <property type="match status" value="1"/>
</dbReference>
<dbReference type="SUPFAM" id="SSF48366">
    <property type="entry name" value="Ras GEF"/>
    <property type="match status" value="1"/>
</dbReference>
<dbReference type="SUPFAM" id="SSF54236">
    <property type="entry name" value="Ubiquitin-like"/>
    <property type="match status" value="2"/>
</dbReference>
<dbReference type="PROSITE" id="PS50004">
    <property type="entry name" value="C2"/>
    <property type="match status" value="1"/>
</dbReference>
<dbReference type="PROSITE" id="PS50007">
    <property type="entry name" value="PIPLC_X_DOMAIN"/>
    <property type="match status" value="1"/>
</dbReference>
<dbReference type="PROSITE" id="PS50008">
    <property type="entry name" value="PIPLC_Y_DOMAIN"/>
    <property type="match status" value="1"/>
</dbReference>
<dbReference type="PROSITE" id="PS50200">
    <property type="entry name" value="RA"/>
    <property type="match status" value="1"/>
</dbReference>
<dbReference type="PROSITE" id="PS50009">
    <property type="entry name" value="RASGEF_CAT"/>
    <property type="match status" value="1"/>
</dbReference>
<gene>
    <name evidence="18" type="primary">Plce1</name>
    <name type="synonym">Plce</name>
</gene>
<accession>Q99P84</accession>
<sequence length="2281" mass="255393">MTSEEMAASFLIPVPQRKVASAQSVAEERGEKVSEAGIPKTRAGRQGGLTPRTISQRNEPEEESPRTDFSQVFSIARGELDSDENHNERCWEENVPGSTKNHAVNCNSLLQSHQHALPPSQLCEVCDSVTEEHLCLQPGIPSPLERKVFPGIELEMEDSPMDVSPLGNQPGIMESSGPHSDRNMAVFHFHYAGDRTMPGAFHTLSEKFILDDCANCVTLPGGQQNKNYMAYTCKLVELTRTCGSKNGQLKCDHCTSLRDEYLCFESSCRKAEALSSGGGFCEDGFTHGPSAKTFLNPLEEFSDNCEDVDDIFKGKKERSTLLVRRFCKNDREVKKSVYTGTRAIVRTLPSGHIGLAAWSYVDQKKAGLMWPCGNGMRPLSTVDVRQSGRQRLSEAQWCLIYSAVRREETEDTVGSLLHCSTQLPTPDTAHGRIGDGPCLKQCVRDSECEYRATLQRTSIAQYITGSLLEATTSLGARSSLLSSFGGSTGRIMLKERQPGTSMANSSPVPSSSAGISKELIDLQPLIQFPEEVASILTEQEQNIYRRVLPMDYLCFLTRDLSSPECQRSLPRLKACISESILMSQSGEHNALEDLVMRFNEVSSWVTWLILTAGSMEEKREVFSYLVHVAKCCWNMGNYNAVMEFLAGLRSRKVLKMWQFMDQSDIETMRSLKDAMAQHESSVEYKKVVTRALHIPGCKVVPFCGVFLKELCEVLDGASGLLKLCPRYSSQEEALEFVADYSGQDNFLQRVGQNGLKNPEKELTVNSIFQIIRSCSRSLETEDEESASEGSGSRKNSLKDKTRWQFIIGDLLDSDNDIFEKSKECDPHGSEESQKAFDHGTELIPWYVLSIQADVHQFLLQGATVIHYDQDTHLSARCFLQLQPDNSTLTWMKPPTASPAGARLKLGVLSNVAEPGKFPSLGNAGVSGLVEGILDLFSVKAVYMGHPGIDIHTVCVQNKLSSMLLSETGVTLLYGLQTTDNRLLHFVAPKHTAKMLFSGLLELTTAVRKIRKFPDQRQQWLRKQYVSFYQEDGRYEGPTLAHAVELFGGRRWSTRNPSPGMSAKNAEKPNMQRNNTLGISTTKKKKKMLMRGESGEVTDDEMATRKAKMYRECRSRSGSDPQEANEQEDSEANVITNPPNPLHSRRAYSLTTAGSPNLATGMSSPISAWSSSSWHGRIKGGMKGFQSFMVSDSNMSFIEFVELFKSFSIRSRKDLKDIFDIYSVPCNRSASESTPLYTNLTIEENTNDLQPDLDLLTRNVSDLGLFMKSKQQLSDNQRQISDAIAAASIVTNGTGIESTSLGIFGVGILQLNDFLVNCQGEHCTYDEILSIIQKFEPNISMCHQGLLSFEGFARFLMDKDNFASKNDESRENKKDLQLPLSYYYIESSHNTYLTGHQLKGESSVELYSQVLLQGCRSIELDCWDGDDGMPIIYHGHTLTTKIPFKEVVEAIDRSAFITSDLPIIISIENHCSLPQQRKMAEIFKSVFGEKLVAKFLFETDFSDDPMLPSPDQLRRKVLLKNKKLKAHQTPVDILKQKAHQLASMQTQAFTGGNANPPPASNEEEEDEEDEYDYDYESLSDDNILEDRPENKSCADKLQFEYNEEVPKRIKKADNSSGNKGKVYDMELGEEFYLPQNKKESRQIAPELSDLVIYCQAVKFPGLSTLNSSGSGRGKERKSRKSIFGNNPGRMSPGETASFNRTSGKSSCEGIRQIWEEPPLSPNTSLSAIIRTPKCYHISSLNENAAKRLCRRYSQKLIQHTACQLLRTYPAATRIDSSNPNPLMFWLHGIQLVALNYQTDDLPLHLNAAMFEANGGCGYVLKPPVLWDKSCPMYQKFSPLERDLDAMDPATYSLTIISGQNVCPSNSTGSPCIEVDVLGMPLDSCHFRTKPIHRNTLNPMWNEQFLFRVHFEDLVFLRFAVVENNSSAITAQRIIPLKALKRGYRHLQLRNLHNEILEISSLFINSRRMEDNPSGSTRPASLMFNTEERKCSQTHKVTVHGVPGPEPFAVFTINEGTKAKQLLQQILAVDQDTKLTAADYFLMEEKHFISKEKNECRKQPFQRAVGPEEDIVQILNSWFPEEGYVGRIVLKPQQETLEEKNIVHDDREVILSSEEESFFVQVHDVSPEQPRTVIKAPRVSTAQDVIQQTLCKAKYSYSILNNPNPCDYVLLEEVMKDAPNKKSSTPKSSQRILLDQECVFQAQSKWKGAGKFILKLKEQVQASREDKRRGISFASELKKLTKSTKQTRGLTSPPQLVASESVQSKEEKPMGALASGDTAGYQS</sequence>
<organism>
    <name type="scientific">Rattus norvegicus</name>
    <name type="common">Rat</name>
    <dbReference type="NCBI Taxonomy" id="10116"/>
    <lineage>
        <taxon>Eukaryota</taxon>
        <taxon>Metazoa</taxon>
        <taxon>Chordata</taxon>
        <taxon>Craniata</taxon>
        <taxon>Vertebrata</taxon>
        <taxon>Euteleostomi</taxon>
        <taxon>Mammalia</taxon>
        <taxon>Eutheria</taxon>
        <taxon>Euarchontoglires</taxon>
        <taxon>Glires</taxon>
        <taxon>Rodentia</taxon>
        <taxon>Myomorpha</taxon>
        <taxon>Muroidea</taxon>
        <taxon>Muridae</taxon>
        <taxon>Murinae</taxon>
        <taxon>Rattus</taxon>
    </lineage>
</organism>
<feature type="chain" id="PRO_0000256240" description="1-phosphatidylinositol 4,5-bisphosphate phosphodiesterase epsilon-1">
    <location>
        <begin position="1"/>
        <end position="2281"/>
    </location>
</feature>
<feature type="domain" description="Ras-GEF" evidence="5">
    <location>
        <begin position="528"/>
        <end position="781"/>
    </location>
</feature>
<feature type="domain" description="PI-PLC X-box" evidence="6">
    <location>
        <begin position="1373"/>
        <end position="1521"/>
    </location>
</feature>
<feature type="domain" description="PI-PLC Y-box" evidence="7">
    <location>
        <begin position="1709"/>
        <end position="1825"/>
    </location>
</feature>
<feature type="domain" description="C2" evidence="3">
    <location>
        <begin position="1830"/>
        <end position="1955"/>
    </location>
</feature>
<feature type="domain" description="Ras-associating 1" evidence="4">
    <location>
        <begin position="1991"/>
        <end position="2093"/>
    </location>
</feature>
<feature type="domain" description="Ras-associating 2" evidence="4">
    <location>
        <begin position="2114"/>
        <end position="2217"/>
    </location>
</feature>
<feature type="region of interest" description="Disordered" evidence="8">
    <location>
        <begin position="1"/>
        <end position="68"/>
    </location>
</feature>
<feature type="region of interest" description="Disordered" evidence="8">
    <location>
        <begin position="1050"/>
        <end position="1146"/>
    </location>
</feature>
<feature type="region of interest" description="Disordered" evidence="8">
    <location>
        <begin position="1547"/>
        <end position="1572"/>
    </location>
</feature>
<feature type="region of interest" description="Disordered" evidence="8">
    <location>
        <begin position="1664"/>
        <end position="1703"/>
    </location>
</feature>
<feature type="region of interest" description="Required for activation by RHOA, RHOB, GNA12, GNA13 and G-beta gamma">
    <location>
        <begin position="1667"/>
        <end position="1743"/>
    </location>
</feature>
<feature type="region of interest" description="Disordered" evidence="8">
    <location>
        <begin position="2239"/>
        <end position="2281"/>
    </location>
</feature>
<feature type="compositionally biased region" description="Polar residues" evidence="8">
    <location>
        <begin position="1070"/>
        <end position="1080"/>
    </location>
</feature>
<feature type="compositionally biased region" description="Acidic residues" evidence="8">
    <location>
        <begin position="1560"/>
        <end position="1572"/>
    </location>
</feature>
<feature type="compositionally biased region" description="Polar residues" evidence="8">
    <location>
        <begin position="1693"/>
        <end position="1703"/>
    </location>
</feature>
<feature type="compositionally biased region" description="Polar residues" evidence="8">
    <location>
        <begin position="2241"/>
        <end position="2260"/>
    </location>
</feature>
<feature type="active site" evidence="6">
    <location>
        <position position="1388"/>
    </location>
</feature>
<feature type="active site" evidence="6">
    <location>
        <position position="1433"/>
    </location>
</feature>
<feature type="modified residue" description="Phosphoserine" evidence="19">
    <location>
        <position position="1093"/>
    </location>
</feature>
<feature type="mutagenesis site" description="Inhibits binding to HRAS by 59% and phospholipase stimulation by HRAS by 51%. Inhibits binding to HRAS by 97% and phospholipase stimulation by HRAS by 86%; when associated with A-2152." evidence="9">
    <original>K</original>
    <variation>A</variation>
    <location>
        <position position="2150"/>
    </location>
</feature>
<feature type="mutagenesis site" description="Inhibits binding to HRAS by 99% and phospholipase stimulation by HRAS by 94%. Inhibits binding to HRAS by 97% and phospholipase stimulation by HRAS by 94%; when associated with E-2152." evidence="9">
    <original>K</original>
    <variation>E</variation>
    <location>
        <position position="2150"/>
    </location>
</feature>
<feature type="mutagenesis site" description="Inhibits binding to HRAS by 19% and phospholipase stimulation by HRAS by 30%. Inhibits binding to HRAS by 97% and phospholipase stimulation by HRAS by 86%; when associated with A-2150." evidence="9">
    <original>K</original>
    <variation>A</variation>
    <location>
        <position position="2152"/>
    </location>
</feature>
<feature type="mutagenesis site" description="Inhibits binding to HRAS by 67% and phospholipase stimulation by HRAS by 47%. Inhibits binding to HRAS by 97% and phospholipase stimulation by HRAS by 94%; when associated with E-2150." evidence="9">
    <original>K</original>
    <variation>E</variation>
    <location>
        <position position="2152"/>
    </location>
</feature>
<feature type="helix" evidence="20">
    <location>
        <begin position="1307"/>
        <end position="1318"/>
    </location>
</feature>
<feature type="helix" evidence="20">
    <location>
        <begin position="1324"/>
        <end position="1334"/>
    </location>
</feature>
<feature type="helix" evidence="20">
    <location>
        <begin position="1338"/>
        <end position="1341"/>
    </location>
</feature>
<feature type="turn" evidence="20">
    <location>
        <begin position="1342"/>
        <end position="1344"/>
    </location>
</feature>
<feature type="helix" evidence="20">
    <location>
        <begin position="1348"/>
        <end position="1356"/>
    </location>
</feature>
<feature type="strand" evidence="20">
    <location>
        <begin position="1361"/>
        <end position="1364"/>
    </location>
</feature>
<feature type="helix" evidence="20">
    <location>
        <begin position="1365"/>
        <end position="1367"/>
    </location>
</feature>
<feature type="helix" evidence="20">
    <location>
        <begin position="1373"/>
        <end position="1375"/>
    </location>
</feature>
<feature type="helix" evidence="20">
    <location>
        <begin position="1379"/>
        <end position="1381"/>
    </location>
</feature>
<feature type="strand" evidence="20">
    <location>
        <begin position="1382"/>
        <end position="1384"/>
    </location>
</feature>
<feature type="strand" evidence="20">
    <location>
        <begin position="1386"/>
        <end position="1389"/>
    </location>
</feature>
<feature type="strand" evidence="20">
    <location>
        <begin position="1392"/>
        <end position="1394"/>
    </location>
</feature>
<feature type="strand" evidence="20">
    <location>
        <begin position="1396"/>
        <end position="1399"/>
    </location>
</feature>
<feature type="helix" evidence="20">
    <location>
        <begin position="1404"/>
        <end position="1412"/>
    </location>
</feature>
<feature type="strand" evidence="20">
    <location>
        <begin position="1416"/>
        <end position="1422"/>
    </location>
</feature>
<feature type="helix" evidence="20">
    <location>
        <begin position="1443"/>
        <end position="1453"/>
    </location>
</feature>
<feature type="turn" evidence="20">
    <location>
        <begin position="1454"/>
        <end position="1456"/>
    </location>
</feature>
<feature type="strand" evidence="20">
    <location>
        <begin position="1462"/>
        <end position="1468"/>
    </location>
</feature>
<feature type="helix" evidence="20">
    <location>
        <begin position="1472"/>
        <end position="1486"/>
    </location>
</feature>
<feature type="helix" evidence="20">
    <location>
        <begin position="1487"/>
        <end position="1489"/>
    </location>
</feature>
<feature type="helix" evidence="20">
    <location>
        <begin position="1497"/>
        <end position="1500"/>
    </location>
</feature>
<feature type="strand" evidence="20">
    <location>
        <begin position="1501"/>
        <end position="1503"/>
    </location>
</feature>
<feature type="turn" evidence="20">
    <location>
        <begin position="1509"/>
        <end position="1514"/>
    </location>
</feature>
<feature type="strand" evidence="20">
    <location>
        <begin position="1516"/>
        <end position="1521"/>
    </location>
</feature>
<feature type="helix" evidence="20">
    <location>
        <begin position="1529"/>
        <end position="1541"/>
    </location>
</feature>
<feature type="strand" evidence="20">
    <location>
        <begin position="1621"/>
        <end position="1623"/>
    </location>
</feature>
<feature type="turn" evidence="20">
    <location>
        <begin position="1624"/>
        <end position="1627"/>
    </location>
</feature>
<feature type="strand" evidence="20">
    <location>
        <begin position="1628"/>
        <end position="1630"/>
    </location>
</feature>
<feature type="helix" evidence="20">
    <location>
        <begin position="1644"/>
        <end position="1647"/>
    </location>
</feature>
<feature type="strand" evidence="20">
    <location>
        <begin position="1651"/>
        <end position="1655"/>
    </location>
</feature>
<feature type="helix" evidence="20">
    <location>
        <begin position="1732"/>
        <end position="1734"/>
    </location>
</feature>
<feature type="strand" evidence="20">
    <location>
        <begin position="1735"/>
        <end position="1740"/>
    </location>
</feature>
<feature type="helix" evidence="20">
    <location>
        <begin position="1741"/>
        <end position="1750"/>
    </location>
</feature>
<feature type="helix" evidence="20">
    <location>
        <begin position="1752"/>
        <end position="1761"/>
    </location>
</feature>
<feature type="strand" evidence="20">
    <location>
        <begin position="1762"/>
        <end position="1767"/>
    </location>
</feature>
<feature type="helix" evidence="20">
    <location>
        <begin position="1781"/>
        <end position="1785"/>
    </location>
</feature>
<feature type="strand" evidence="20">
    <location>
        <begin position="1789"/>
        <end position="1793"/>
    </location>
</feature>
<feature type="helix" evidence="20">
    <location>
        <begin position="1800"/>
        <end position="1808"/>
    </location>
</feature>
<feature type="helix" evidence="20">
    <location>
        <begin position="1809"/>
        <end position="1814"/>
    </location>
</feature>
<feature type="strand" evidence="20">
    <location>
        <begin position="1816"/>
        <end position="1819"/>
    </location>
</feature>
<feature type="helix" evidence="20">
    <location>
        <begin position="1822"/>
        <end position="1824"/>
    </location>
</feature>
<feature type="turn" evidence="20">
    <location>
        <begin position="1830"/>
        <end position="1834"/>
    </location>
</feature>
<feature type="strand" evidence="20">
    <location>
        <begin position="1844"/>
        <end position="1846"/>
    </location>
</feature>
<feature type="strand" evidence="20">
    <location>
        <begin position="1848"/>
        <end position="1859"/>
    </location>
</feature>
<feature type="strand" evidence="20">
    <location>
        <begin position="1869"/>
        <end position="1878"/>
    </location>
</feature>
<feature type="turn" evidence="20">
    <location>
        <begin position="1879"/>
        <end position="1881"/>
    </location>
</feature>
<feature type="strand" evidence="20">
    <location>
        <begin position="1883"/>
        <end position="1886"/>
    </location>
</feature>
<feature type="strand" evidence="20">
    <location>
        <begin position="1894"/>
        <end position="1896"/>
    </location>
</feature>
<feature type="strand" evidence="20">
    <location>
        <begin position="1898"/>
        <end position="1908"/>
    </location>
</feature>
<feature type="helix" evidence="20">
    <location>
        <begin position="1910"/>
        <end position="1912"/>
    </location>
</feature>
<feature type="strand" evidence="20">
    <location>
        <begin position="1914"/>
        <end position="1921"/>
    </location>
</feature>
<feature type="turn" evidence="20">
    <location>
        <begin position="1922"/>
        <end position="1925"/>
    </location>
</feature>
<feature type="strand" evidence="20">
    <location>
        <begin position="1926"/>
        <end position="1934"/>
    </location>
</feature>
<feature type="helix" evidence="20">
    <location>
        <begin position="1935"/>
        <end position="1937"/>
    </location>
</feature>
<feature type="strand" evidence="20">
    <location>
        <begin position="1940"/>
        <end position="1948"/>
    </location>
</feature>
<feature type="strand" evidence="20">
    <location>
        <begin position="1954"/>
        <end position="1967"/>
    </location>
</feature>
<feature type="helix" evidence="20">
    <location>
        <begin position="1978"/>
        <end position="1981"/>
    </location>
</feature>
<feature type="helix" evidence="20">
    <location>
        <begin position="1985"/>
        <end position="1990"/>
    </location>
</feature>
<feature type="strand" evidence="20">
    <location>
        <begin position="1991"/>
        <end position="1999"/>
    </location>
</feature>
<feature type="strand" evidence="20">
    <location>
        <begin position="2001"/>
        <end position="2012"/>
    </location>
</feature>
<feature type="helix" evidence="20">
    <location>
        <begin position="2017"/>
        <end position="2025"/>
    </location>
</feature>
<feature type="strand" evidence="20">
    <location>
        <begin position="2038"/>
        <end position="2046"/>
    </location>
</feature>
<feature type="strand" evidence="20">
    <location>
        <begin position="2059"/>
        <end position="2062"/>
    </location>
</feature>
<feature type="helix" evidence="20">
    <location>
        <begin position="2069"/>
        <end position="2073"/>
    </location>
</feature>
<feature type="strand" evidence="20">
    <location>
        <begin position="2078"/>
        <end position="2090"/>
    </location>
</feature>
<protein>
    <recommendedName>
        <fullName evidence="17">1-phosphatidylinositol 4,5-bisphosphate phosphodiesterase epsilon-1</fullName>
        <ecNumber evidence="9">3.1.4.11</ecNumber>
    </recommendedName>
    <alternativeName>
        <fullName>Phosphoinositide phospholipase C-epsilon-1</fullName>
    </alternativeName>
    <alternativeName>
        <fullName>Phospholipase C-epsilon-1</fullName>
        <shortName>PLC-epsilon-1</shortName>
    </alternativeName>
</protein>
<reference key="1">
    <citation type="journal article" date="2001" name="EMBO J.">
        <title>Phospholipase C(epsilon): a novel Ras effector.</title>
        <authorList>
            <person name="Kelley G.G."/>
            <person name="Reks S.E."/>
            <person name="Ondrako J.M."/>
            <person name="Smrcka A.V."/>
        </authorList>
    </citation>
    <scope>NUCLEOTIDE SEQUENCE [MRNA]</scope>
    <scope>TISSUE SPECIFICITY</scope>
    <scope>CATALYTIC ACTIVITY</scope>
    <scope>ACTIVITY REGULATION</scope>
    <scope>COFACTOR</scope>
    <scope>INTERACTION WITH HRAS AND RAP1A</scope>
    <scope>MUTAGENESIS OF LYS-2150 AND LYS-2152</scope>
    <source>
        <tissue>Heart</tissue>
    </source>
</reference>
<reference key="2">
    <citation type="journal article" date="2001" name="J. Biol. Chem.">
        <title>Activation of phospholipase C-epsilon by heterotrimeric G protein betagamma-subunits.</title>
        <authorList>
            <person name="Wing M.R."/>
            <person name="Houston D."/>
            <person name="Kelley G.G."/>
            <person name="Der C.J."/>
            <person name="Siderovski D.P."/>
            <person name="Harden T.K."/>
        </authorList>
    </citation>
    <scope>ACTIVITY REGULATION</scope>
</reference>
<reference key="3">
    <citation type="journal article" date="2002" name="J. Biol. Chem.">
        <title>Involvement of phosphatidylinositol 3-kinase, but not RalGDS, in TC21/R-Ras2-mediated transformation.</title>
        <authorList>
            <person name="Murphy G.A."/>
            <person name="Graham S.M."/>
            <person name="Morita S."/>
            <person name="Reks S.E."/>
            <person name="Rogers-Graham K."/>
            <person name="Vojtek A."/>
            <person name="Kelley G.G."/>
            <person name="Der C.J."/>
        </authorList>
    </citation>
    <scope>ACTIVITY REGULATION</scope>
</reference>
<reference key="4">
    <citation type="journal article" date="2003" name="J. Biol. Chem.">
        <title>Direct activation of phospholipase C-epsilon by Rho.</title>
        <authorList>
            <person name="Wing M.R."/>
            <person name="Snyder J.T."/>
            <person name="Sondek J."/>
            <person name="Harden T.K."/>
        </authorList>
    </citation>
    <scope>ACTIVITY REGULATION</scope>
    <scope>INTERACTION WITH RHOA</scope>
</reference>
<reference key="5">
    <citation type="journal article" date="2003" name="Proc. Natl. Acad. Sci. U.S.A.">
        <title>Activation of CD4 T cells by Raf-independent effectors of Ras.</title>
        <authorList>
            <person name="Czyzyk J."/>
            <person name="Brogdon J.L."/>
            <person name="Badou A."/>
            <person name="Henegariu O."/>
            <person name="Preston Hurlburt P."/>
            <person name="Flavell R."/>
            <person name="Bottomly K."/>
        </authorList>
    </citation>
    <scope>FUNCTION</scope>
</reference>
<reference key="6">
    <citation type="journal article" date="2004" name="J. Biol. Chem.">
        <title>RhoA activates purified phospholipase C-epsilon by a guanine nucleotide-dependent mechanism.</title>
        <authorList>
            <person name="Seifert J.P."/>
            <person name="Wing M.R."/>
            <person name="Snyder J.T."/>
            <person name="Gershburg S."/>
            <person name="Sondek J."/>
            <person name="Harden T.K."/>
        </authorList>
    </citation>
    <scope>BIOPHYSICOCHEMICAL PROPERTIES</scope>
    <scope>ACTIVITY REGULATION</scope>
</reference>
<reference key="7">
    <citation type="journal article" date="2006" name="J. Biol. Chem.">
        <title>G-protein-coupled receptor agonists activate endogenous phospholipase Cepsilon and phospholipase Cbeta3 in a temporally distinct manner.</title>
        <authorList>
            <person name="Kelley G.G."/>
            <person name="Kaproth-Joslin K.A."/>
            <person name="Reks S.E."/>
            <person name="Smrcka A.V."/>
            <person name="Wojcikiewicz R.J.H."/>
        </authorList>
    </citation>
    <scope>FUNCTION</scope>
</reference>
<reference key="8">
    <citation type="journal article" date="2006" name="Nat. Genet.">
        <title>Positional cloning uncovers mutations in PLCE1 responsible for a nephrotic syndrome variant that may be reversible.</title>
        <authorList>
            <person name="Hinkes B."/>
            <person name="Wiggins R.C."/>
            <person name="Gbadegesin R."/>
            <person name="Vlangos C.N."/>
            <person name="Seelow D."/>
            <person name="Nuernberg G."/>
            <person name="Garg P."/>
            <person name="Verma R."/>
            <person name="Chaib H."/>
            <person name="Hoskins B.E."/>
            <person name="Ashraf S."/>
            <person name="Becker C."/>
            <person name="Hennies H.C."/>
            <person name="Goyal M."/>
            <person name="Wharram B.L."/>
            <person name="Schachter A.D."/>
            <person name="Mudumana S."/>
            <person name="Drummond I."/>
            <person name="Kerjaschki D."/>
            <person name="Waldherr R."/>
            <person name="Dietrich A."/>
            <person name="Ozaltin F."/>
            <person name="Bakkaloglu A."/>
            <person name="Cleper R."/>
            <person name="Basel-Vanagaite L."/>
            <person name="Pohl M."/>
            <person name="Griebel M."/>
            <person name="Tsygin A.N."/>
            <person name="Soylu A."/>
            <person name="Mueller D."/>
            <person name="Sorli C.S."/>
            <person name="Bunney T.D."/>
            <person name="Katan M."/>
            <person name="Liu J."/>
            <person name="Attanasio M."/>
            <person name="O'toole J.F."/>
            <person name="Hasselbacher K."/>
            <person name="Mucha B."/>
            <person name="Otto E.A."/>
            <person name="Airik R."/>
            <person name="Kispert A."/>
            <person name="Kelley G.G."/>
            <person name="Smrcka A.V."/>
            <person name="Gudermann T."/>
            <person name="Holzman L.B."/>
            <person name="Nuernberg P."/>
            <person name="Hildebrandt F."/>
        </authorList>
    </citation>
    <scope>FUNCTION</scope>
    <scope>TISSUE SPECIFICITY</scope>
    <scope>INTERACTION WITH IQGAP1</scope>
</reference>
<reference key="9">
    <citation type="journal article" date="2012" name="Nat. Commun.">
        <title>Quantitative maps of protein phosphorylation sites across 14 different rat organs and tissues.</title>
        <authorList>
            <person name="Lundby A."/>
            <person name="Secher A."/>
            <person name="Lage K."/>
            <person name="Nordsborg N.B."/>
            <person name="Dmytriyev A."/>
            <person name="Lundby C."/>
            <person name="Olsen J.V."/>
        </authorList>
    </citation>
    <scope>PHOSPHORYLATION [LARGE SCALE ANALYSIS] AT SER-1093</scope>
    <scope>IDENTIFICATION BY MASS SPECTROMETRY [LARGE SCALE ANALYSIS]</scope>
</reference>
<keyword id="KW-0002">3D-structure</keyword>
<keyword id="KW-0106">Calcium</keyword>
<keyword id="KW-1003">Cell membrane</keyword>
<keyword id="KW-0966">Cell projection</keyword>
<keyword id="KW-0963">Cytoplasm</keyword>
<keyword id="KW-0333">Golgi apparatus</keyword>
<keyword id="KW-0344">Guanine-nucleotide releasing factor</keyword>
<keyword id="KW-0378">Hydrolase</keyword>
<keyword id="KW-0442">Lipid degradation</keyword>
<keyword id="KW-0443">Lipid metabolism</keyword>
<keyword id="KW-0472">Membrane</keyword>
<keyword id="KW-0479">Metal-binding</keyword>
<keyword id="KW-0597">Phosphoprotein</keyword>
<keyword id="KW-1185">Reference proteome</keyword>
<keyword id="KW-0677">Repeat</keyword>
<keyword id="KW-0807">Transducer</keyword>